<organism>
    <name type="scientific">Hydra vulgaris</name>
    <name type="common">Hydra</name>
    <name type="synonym">Hydra attenuata</name>
    <dbReference type="NCBI Taxonomy" id="6087"/>
    <lineage>
        <taxon>Eukaryota</taxon>
        <taxon>Metazoa</taxon>
        <taxon>Cnidaria</taxon>
        <taxon>Hydrozoa</taxon>
        <taxon>Hydroidolina</taxon>
        <taxon>Anthoathecata</taxon>
        <taxon>Aplanulata</taxon>
        <taxon>Hydridae</taxon>
        <taxon>Hydra</taxon>
    </lineage>
</organism>
<protein>
    <recommendedName>
        <fullName evidence="4">Arminin 7591</fullName>
    </recommendedName>
</protein>
<accession>R9UC06</accession>
<feature type="signal peptide" evidence="2">
    <location>
        <begin position="1"/>
        <end position="18"/>
    </location>
</feature>
<feature type="propeptide" id="PRO_0000461984" evidence="1">
    <location>
        <begin position="19"/>
        <end position="58"/>
    </location>
</feature>
<feature type="peptide" id="PRO_5004480497" description="Arminin 7591" evidence="1">
    <location>
        <begin position="59"/>
        <end position="86"/>
    </location>
</feature>
<feature type="modified residue" description="Leucine amide" evidence="1">
    <location>
        <position position="86"/>
    </location>
</feature>
<comment type="function">
    <text evidence="1">Antimicrobial peptide with a broad-spectrum antimicrobial activity. Keeps its antibacterial activity under a wide range of salt concentrations that mimic physiological conditions of human blood, which is surprising, since Hydra is an obligate freshwater animal with nearly no salt tolerance. Does not affect red blood cells.</text>
</comment>
<comment type="subcellular location">
    <subcellularLocation>
        <location evidence="1">Secreted</location>
    </subcellularLocation>
    <subcellularLocation>
        <location evidence="1">Target cell membrane</location>
    </subcellularLocation>
</comment>
<comment type="tissue specificity">
    <text evidence="3">Expressed in entodermal epithelium along the body column.</text>
</comment>
<comment type="similarity">
    <text evidence="5">Belongs to the arminin family.</text>
</comment>
<reference evidence="6" key="1">
    <citation type="journal article" date="2013" name="Proc. Natl. Acad. Sci. U.S.A.">
        <title>Distinct antimicrobial peptide expression determines host species-specific bacterial associations.</title>
        <authorList>
            <person name="Franzenburg S."/>
            <person name="Walter J."/>
            <person name="Kunzel S."/>
            <person name="Wang J."/>
            <person name="Baines J.F."/>
            <person name="Bosch T.C."/>
            <person name="Fraune S."/>
        </authorList>
    </citation>
    <scope>NUCLEOTIDE SEQUENCE [MRNA]</scope>
    <scope>TISSUE SPECIFICITY</scope>
    <source>
        <strain>AEP</strain>
    </source>
</reference>
<name>ARM91_HYDVU</name>
<keyword id="KW-0027">Amidation</keyword>
<keyword id="KW-0044">Antibiotic</keyword>
<keyword id="KW-0929">Antimicrobial</keyword>
<keyword id="KW-0391">Immunity</keyword>
<keyword id="KW-0399">Innate immunity</keyword>
<keyword id="KW-0472">Membrane</keyword>
<keyword id="KW-1185">Reference proteome</keyword>
<keyword id="KW-0964">Secreted</keyword>
<keyword id="KW-0732">Signal</keyword>
<keyword id="KW-1052">Target cell membrane</keyword>
<keyword id="KW-1053">Target membrane</keyword>
<sequence length="89" mass="10586">MRSAFAVLFLALIAITYSKNYEDVKEEIKNEVENEILKDLEEDVNEFDDNVQEEVNDARPLRRFFRRIRGRKLLPYVPTAIKLWNLGKK</sequence>
<proteinExistence type="evidence at transcript level"/>
<dbReference type="EMBL" id="KC701505">
    <property type="protein sequence ID" value="AGN53412.1"/>
    <property type="molecule type" value="mRNA"/>
</dbReference>
<dbReference type="RefSeq" id="XP_065643179.1">
    <property type="nucleotide sequence ID" value="XM_065787107.1"/>
</dbReference>
<dbReference type="GeneID" id="136074882"/>
<dbReference type="Proteomes" id="UP000694840">
    <property type="component" value="Unplaced"/>
</dbReference>
<dbReference type="GO" id="GO:0005576">
    <property type="term" value="C:extracellular region"/>
    <property type="evidence" value="ECO:0007669"/>
    <property type="project" value="UniProtKB-SubCell"/>
</dbReference>
<evidence type="ECO:0000250" key="1">
    <source>
        <dbReference type="UniProtKB" id="D2XUU4"/>
    </source>
</evidence>
<evidence type="ECO:0000255" key="2"/>
<evidence type="ECO:0000269" key="3">
    <source>
    </source>
</evidence>
<evidence type="ECO:0000303" key="4">
    <source>
    </source>
</evidence>
<evidence type="ECO:0000305" key="5"/>
<evidence type="ECO:0000312" key="6">
    <source>
        <dbReference type="EMBL" id="AGN53412.1"/>
    </source>
</evidence>